<dbReference type="EMBL" id="CR382124">
    <property type="protein sequence ID" value="CAH00333.1"/>
    <property type="molecule type" value="Genomic_DNA"/>
</dbReference>
<dbReference type="RefSeq" id="XP_453237.1">
    <property type="nucleotide sequence ID" value="XM_453237.1"/>
</dbReference>
<dbReference type="FunCoup" id="Q6CS52">
    <property type="interactions" value="58"/>
</dbReference>
<dbReference type="STRING" id="284590.Q6CS52"/>
<dbReference type="PaxDb" id="284590-Q6CS52"/>
<dbReference type="KEGG" id="kla:KLLA0_D03861g"/>
<dbReference type="eggNOG" id="ENOG502QVXN">
    <property type="taxonomic scope" value="Eukaryota"/>
</dbReference>
<dbReference type="HOGENOM" id="CLU_028817_0_0_1"/>
<dbReference type="InParanoid" id="Q6CS52"/>
<dbReference type="OMA" id="LRFKVWP"/>
<dbReference type="Proteomes" id="UP000000598">
    <property type="component" value="Chromosome D"/>
</dbReference>
<dbReference type="GO" id="GO:0005737">
    <property type="term" value="C:cytoplasm"/>
    <property type="evidence" value="ECO:0007669"/>
    <property type="project" value="UniProtKB-SubCell"/>
</dbReference>
<dbReference type="Gene3D" id="1.10.472.80">
    <property type="entry name" value="Ypt/Rab-GAP domain of gyp1p, domain 3"/>
    <property type="match status" value="1"/>
</dbReference>
<dbReference type="InterPro" id="IPR000195">
    <property type="entry name" value="Rab-GAP-TBC_dom"/>
</dbReference>
<dbReference type="InterPro" id="IPR035969">
    <property type="entry name" value="Rab-GAP_TBC_sf"/>
</dbReference>
<dbReference type="Pfam" id="PF00566">
    <property type="entry name" value="RabGAP-TBC"/>
    <property type="match status" value="1"/>
</dbReference>
<dbReference type="SMART" id="SM00164">
    <property type="entry name" value="TBC"/>
    <property type="match status" value="1"/>
</dbReference>
<dbReference type="SUPFAM" id="SSF47923">
    <property type="entry name" value="Ypt/Rab-GAP domain of gyp1p"/>
    <property type="match status" value="1"/>
</dbReference>
<proteinExistence type="inferred from homology"/>
<organism>
    <name type="scientific">Kluyveromyces lactis (strain ATCC 8585 / CBS 2359 / DSM 70799 / NBRC 1267 / NRRL Y-1140 / WM37)</name>
    <name type="common">Yeast</name>
    <name type="synonym">Candida sphaerica</name>
    <dbReference type="NCBI Taxonomy" id="284590"/>
    <lineage>
        <taxon>Eukaryota</taxon>
        <taxon>Fungi</taxon>
        <taxon>Dikarya</taxon>
        <taxon>Ascomycota</taxon>
        <taxon>Saccharomycotina</taxon>
        <taxon>Saccharomycetes</taxon>
        <taxon>Saccharomycetales</taxon>
        <taxon>Saccharomycetaceae</taxon>
        <taxon>Kluyveromyces</taxon>
    </lineage>
</organism>
<keyword id="KW-0963">Cytoplasm</keyword>
<keyword id="KW-1185">Reference proteome</keyword>
<accession>Q6CS52</accession>
<comment type="subcellular location">
    <subcellularLocation>
        <location evidence="1">Cytoplasm</location>
    </subcellularLocation>
</comment>
<comment type="similarity">
    <text evidence="3">Belongs to the OCA5 family.</text>
</comment>
<name>OCA5_KLULA</name>
<reference key="1">
    <citation type="journal article" date="2004" name="Nature">
        <title>Genome evolution in yeasts.</title>
        <authorList>
            <person name="Dujon B."/>
            <person name="Sherman D."/>
            <person name="Fischer G."/>
            <person name="Durrens P."/>
            <person name="Casaregola S."/>
            <person name="Lafontaine I."/>
            <person name="de Montigny J."/>
            <person name="Marck C."/>
            <person name="Neuveglise C."/>
            <person name="Talla E."/>
            <person name="Goffard N."/>
            <person name="Frangeul L."/>
            <person name="Aigle M."/>
            <person name="Anthouard V."/>
            <person name="Babour A."/>
            <person name="Barbe V."/>
            <person name="Barnay S."/>
            <person name="Blanchin S."/>
            <person name="Beckerich J.-M."/>
            <person name="Beyne E."/>
            <person name="Bleykasten C."/>
            <person name="Boisrame A."/>
            <person name="Boyer J."/>
            <person name="Cattolico L."/>
            <person name="Confanioleri F."/>
            <person name="de Daruvar A."/>
            <person name="Despons L."/>
            <person name="Fabre E."/>
            <person name="Fairhead C."/>
            <person name="Ferry-Dumazet H."/>
            <person name="Groppi A."/>
            <person name="Hantraye F."/>
            <person name="Hennequin C."/>
            <person name="Jauniaux N."/>
            <person name="Joyet P."/>
            <person name="Kachouri R."/>
            <person name="Kerrest A."/>
            <person name="Koszul R."/>
            <person name="Lemaire M."/>
            <person name="Lesur I."/>
            <person name="Ma L."/>
            <person name="Muller H."/>
            <person name="Nicaud J.-M."/>
            <person name="Nikolski M."/>
            <person name="Oztas S."/>
            <person name="Ozier-Kalogeropoulos O."/>
            <person name="Pellenz S."/>
            <person name="Potier S."/>
            <person name="Richard G.-F."/>
            <person name="Straub M.-L."/>
            <person name="Suleau A."/>
            <person name="Swennen D."/>
            <person name="Tekaia F."/>
            <person name="Wesolowski-Louvel M."/>
            <person name="Westhof E."/>
            <person name="Wirth B."/>
            <person name="Zeniou-Meyer M."/>
            <person name="Zivanovic Y."/>
            <person name="Bolotin-Fukuhara M."/>
            <person name="Thierry A."/>
            <person name="Bouchier C."/>
            <person name="Caudron B."/>
            <person name="Scarpelli C."/>
            <person name="Gaillardin C."/>
            <person name="Weissenbach J."/>
            <person name="Wincker P."/>
            <person name="Souciet J.-L."/>
        </authorList>
    </citation>
    <scope>NUCLEOTIDE SEQUENCE [LARGE SCALE GENOMIC DNA]</scope>
    <source>
        <strain>ATCC 8585 / CBS 2359 / DSM 70799 / NBRC 1267 / NRRL Y-1140 / WM37</strain>
    </source>
</reference>
<protein>
    <recommendedName>
        <fullName>Oxidant-induced cell-cycle arrest protein 5</fullName>
    </recommendedName>
</protein>
<sequence length="530" mass="62300">MPLKPSSSHSERKNRLHLHASSRNAKQQEWNRELVTLFIKLLNENDHASLALVARNAGVPPQLRPAVWPTLLKYHPMVISPNIMSNTLVFKDDENEAELRYFPEDRSEEDISELMENDLNKYFQVRNSVPVSAEIQEIKSLLKECVWQFLRKWNKICKYESGLIWIALGLAEWCPLKNNDDLVLAGRKHHHHNSCLRHLYEEYPIPDELLNQLPDTEFDFAAIYERLVLVLFHAPALDEKPDKSNYHLLKSGNLNQQSQLFFKVFAKTLPELYQPITDEGALQGSKKATWLYWWIKCCGCRVLHRQDRGRVWDVLLGWRPRPESINYYLEYNHKSFESIYPPELKLSSEIFHKICKCEHDEFWFPDLMSLRLGQNGLNQDEDVIRELIRRNKYGDDGHTTETQENEIPYSLLNPHAELLFIYVAIMQHNEFKLLEFEETEITEFLNNVPLISKFDDYNFKKMYEDDDISGSSTDTDESNASGIRPSSSNHMMIEVGTDDKTAHSFDDIYQQAGDIWRNWAWQEMEEFIEE</sequence>
<evidence type="ECO:0000250" key="1"/>
<evidence type="ECO:0000256" key="2">
    <source>
        <dbReference type="SAM" id="MobiDB-lite"/>
    </source>
</evidence>
<evidence type="ECO:0000305" key="3"/>
<feature type="chain" id="PRO_0000408212" description="Oxidant-induced cell-cycle arrest protein 5">
    <location>
        <begin position="1"/>
        <end position="530"/>
    </location>
</feature>
<feature type="domain" description="Rab-GAP TBC">
    <location>
        <begin position="58"/>
        <end position="319"/>
    </location>
</feature>
<feature type="region of interest" description="Disordered" evidence="2">
    <location>
        <begin position="1"/>
        <end position="24"/>
    </location>
</feature>
<feature type="region of interest" description="Disordered" evidence="2">
    <location>
        <begin position="467"/>
        <end position="491"/>
    </location>
</feature>
<feature type="compositionally biased region" description="Polar residues" evidence="2">
    <location>
        <begin position="479"/>
        <end position="490"/>
    </location>
</feature>
<gene>
    <name type="primary">OCA5</name>
    <name type="ordered locus">KLLA0D03861g</name>
</gene>